<comment type="function">
    <text evidence="7 10">Glutathione S-transferase; part of the gene cluster that mediates the biosynthesis of hypothemycin, a resorcylic acid lactone (RAL) that irreversibly inhibits a subset of protein kinases with a conserved cysteine in the ATP binding site such as human ERK2 (PubMed:18567690). The first step is performed by both PKSs hmp3 and hmp8 and leads to the production of 7',8'-dehydrozearalenol (DHZ) (PubMed:18567690, PubMed:20222707). The highly reducing PKS hpm8 synthesizes the reduced hexaketide (7S,11S,2E,8E)-7,11-dihydroxy-dodeca-2,8-dienoate, which is transferred downstream to the non-reducing PKS hpm3 (PubMed:20222707). Hpm3 then extends the reduced hexaketide to a nonaketide, after which regioselective cyclization and macrolactonization affords DHZ (PubMed:20222707). The next step is the conversion of DHZ into aigialomycin C and is performed by the O-methyltransferase hmp5, the FAD-binding monooxygenase hmp7, and the cytochrome P450 monooxygenase hmp1 (PubMed:18567690). The wide substrate tolerance of the hmp5 and hmp7 implies that the reactions from DHZ to aigialomycin C can occur in any order (PubMed:18567690). The steps from aigialomycin C to hypothemycin are less well established (PubMed:18567690). The FAD-linked oxidoreductase hmp9 presumably catalyzes oxidation of the C-6' hydroxyl to a ketone (PubMed:18567690). The timing of this oxidation is important, since the resulting enone functional group is a Michael acceptor that can react spontaneously with glutathione, an abundant metabolite in fungal cells (PubMed:18567690). The glutathione S-transferase hmp2 catalyzes cis-trans isomerization of the 7',8' double bond with equilibrium favoring the trans isomer (PubMed:18567690). The hpm6-encoded transporter might preferentially pump hypothemycin out of the cell relative to the trans isomer aigialomycin A. The cis-to-trans isomerization may be coupled with C-4' hydroxylation, since all known hypothemycin analogs containing the enone functional group also have hydroxyl groups at both C-4' and C-5' (PubMed:18567690).</text>
</comment>
<comment type="catalytic activity">
    <reaction evidence="7">
        <text>RX + glutathione = an S-substituted glutathione + a halide anion + H(+)</text>
        <dbReference type="Rhea" id="RHEA:16437"/>
        <dbReference type="ChEBI" id="CHEBI:15378"/>
        <dbReference type="ChEBI" id="CHEBI:16042"/>
        <dbReference type="ChEBI" id="CHEBI:17792"/>
        <dbReference type="ChEBI" id="CHEBI:57925"/>
        <dbReference type="ChEBI" id="CHEBI:90779"/>
        <dbReference type="EC" id="2.5.1.18"/>
    </reaction>
</comment>
<comment type="pathway">
    <text evidence="7">Secondary metabolite biosynthesis.</text>
</comment>
<comment type="biotechnology">
    <text evidence="4 5 6 8 9 11 12 13">Hypothemycin is an antifungal agent that exhibits excellent activity against Peronophythora litchii, which could be helpful for the storage of harvest litchi fruit (PubMed:24106914). Hypothemycin is a strong inhibitor of a subset of MAP kinases such as human ERK2 (PubMed:18571434, PubMed:20118535, PubMed:26371861). It can therefore be used as an anti-cancer drug thanks to its inhibitory activity of Ras-mediated cellular signals (PubMed:10421424, PubMed:10595743). It can also inhibit Trypanosoma brucei kinase TbCLK1 which is a good candidate as a therapeutic target for African trypanosomiasis (PubMed:23853713). Finally, hypothemycin also has inhibitor activity of T cell activation (PubMed:10598882).</text>
</comment>
<comment type="similarity">
    <text evidence="15">Belongs to the GST superfamily.</text>
</comment>
<sequence>MVIKLYGSAMSTARVLVTLLEKELPYEHILVDISKGDQNKEEYLKLQPFGKVPVLDDNGFIMYESRAICRYLARKYDSGTKLIPDVDDHEAYGRFEQGCSIEYSYFAAAAETLGTELVIKKYKGLGEPDMTRVAQAEADFDKVFFEYDKILAKQKYLTGDEISLVDLFHLPNASALKAFGYQGTFEKYPNVNRWFSGLQARETWIKATAEAR</sequence>
<keyword id="KW-0808">Transferase</keyword>
<dbReference type="EC" id="2.5.1.18" evidence="7"/>
<dbReference type="EMBL" id="EU520417">
    <property type="protein sequence ID" value="ACD39752.1"/>
    <property type="molecule type" value="Genomic_DNA"/>
</dbReference>
<dbReference type="EMBL" id="EU520418">
    <property type="protein sequence ID" value="ACD39761.1"/>
    <property type="molecule type" value="Genomic_DNA"/>
</dbReference>
<dbReference type="SMR" id="B3FWR8"/>
<dbReference type="GO" id="GO:0005737">
    <property type="term" value="C:cytoplasm"/>
    <property type="evidence" value="ECO:0007669"/>
    <property type="project" value="TreeGrafter"/>
</dbReference>
<dbReference type="GO" id="GO:0043295">
    <property type="term" value="F:glutathione binding"/>
    <property type="evidence" value="ECO:0007669"/>
    <property type="project" value="TreeGrafter"/>
</dbReference>
<dbReference type="GO" id="GO:0004364">
    <property type="term" value="F:glutathione transferase activity"/>
    <property type="evidence" value="ECO:0007669"/>
    <property type="project" value="UniProtKB-EC"/>
</dbReference>
<dbReference type="GO" id="GO:0006749">
    <property type="term" value="P:glutathione metabolic process"/>
    <property type="evidence" value="ECO:0007669"/>
    <property type="project" value="TreeGrafter"/>
</dbReference>
<dbReference type="CDD" id="cd03053">
    <property type="entry name" value="GST_N_Phi"/>
    <property type="match status" value="1"/>
</dbReference>
<dbReference type="FunFam" id="3.40.30.10:FF:000039">
    <property type="entry name" value="Glutathione S-transferase domain"/>
    <property type="match status" value="1"/>
</dbReference>
<dbReference type="Gene3D" id="1.20.1050.10">
    <property type="match status" value="1"/>
</dbReference>
<dbReference type="Gene3D" id="3.40.30.10">
    <property type="entry name" value="Glutaredoxin"/>
    <property type="match status" value="1"/>
</dbReference>
<dbReference type="InterPro" id="IPR010987">
    <property type="entry name" value="Glutathione-S-Trfase_C-like"/>
</dbReference>
<dbReference type="InterPro" id="IPR036282">
    <property type="entry name" value="Glutathione-S-Trfase_C_sf"/>
</dbReference>
<dbReference type="InterPro" id="IPR040079">
    <property type="entry name" value="Glutathione_S-Trfase"/>
</dbReference>
<dbReference type="InterPro" id="IPR004045">
    <property type="entry name" value="Glutathione_S-Trfase_N"/>
</dbReference>
<dbReference type="InterPro" id="IPR004046">
    <property type="entry name" value="GST_C"/>
</dbReference>
<dbReference type="InterPro" id="IPR036249">
    <property type="entry name" value="Thioredoxin-like_sf"/>
</dbReference>
<dbReference type="PANTHER" id="PTHR43900">
    <property type="entry name" value="GLUTATHIONE S-TRANSFERASE RHO"/>
    <property type="match status" value="1"/>
</dbReference>
<dbReference type="PANTHER" id="PTHR43900:SF3">
    <property type="entry name" value="GLUTATHIONE S-TRANSFERASE RHO"/>
    <property type="match status" value="1"/>
</dbReference>
<dbReference type="Pfam" id="PF00043">
    <property type="entry name" value="GST_C"/>
    <property type="match status" value="1"/>
</dbReference>
<dbReference type="Pfam" id="PF02798">
    <property type="entry name" value="GST_N"/>
    <property type="match status" value="1"/>
</dbReference>
<dbReference type="SFLD" id="SFLDS00019">
    <property type="entry name" value="Glutathione_Transferase_(cytos"/>
    <property type="match status" value="1"/>
</dbReference>
<dbReference type="SFLD" id="SFLDG00358">
    <property type="entry name" value="Main_(cytGST)"/>
    <property type="match status" value="1"/>
</dbReference>
<dbReference type="SUPFAM" id="SSF47616">
    <property type="entry name" value="GST C-terminal domain-like"/>
    <property type="match status" value="1"/>
</dbReference>
<dbReference type="SUPFAM" id="SSF52833">
    <property type="entry name" value="Thioredoxin-like"/>
    <property type="match status" value="1"/>
</dbReference>
<dbReference type="PROSITE" id="PS50405">
    <property type="entry name" value="GST_CTER"/>
    <property type="match status" value="1"/>
</dbReference>
<dbReference type="PROSITE" id="PS50404">
    <property type="entry name" value="GST_NTER"/>
    <property type="match status" value="1"/>
</dbReference>
<feature type="chain" id="PRO_0000437598" description="Glutathione S-transferase hmp2">
    <location>
        <begin position="1"/>
        <end position="212"/>
    </location>
</feature>
<feature type="domain" description="GST N-terminal" evidence="2">
    <location>
        <begin position="1"/>
        <end position="80"/>
    </location>
</feature>
<feature type="domain" description="GST C-terminal" evidence="3">
    <location>
        <begin position="88"/>
        <end position="212"/>
    </location>
</feature>
<feature type="binding site" evidence="1">
    <location>
        <begin position="51"/>
        <end position="52"/>
    </location>
    <ligand>
        <name>glutathione</name>
        <dbReference type="ChEBI" id="CHEBI:57925"/>
    </ligand>
</feature>
<feature type="binding site" evidence="1">
    <location>
        <begin position="64"/>
        <end position="65"/>
    </location>
    <ligand>
        <name>glutathione</name>
        <dbReference type="ChEBI" id="CHEBI:57925"/>
    </ligand>
</feature>
<evidence type="ECO:0000250" key="1">
    <source>
        <dbReference type="UniProtKB" id="P08263"/>
    </source>
</evidence>
<evidence type="ECO:0000255" key="2">
    <source>
        <dbReference type="PROSITE-ProRule" id="PRU00684"/>
    </source>
</evidence>
<evidence type="ECO:0000255" key="3">
    <source>
        <dbReference type="PROSITE-ProRule" id="PRU00685"/>
    </source>
</evidence>
<evidence type="ECO:0000269" key="4">
    <source>
    </source>
</evidence>
<evidence type="ECO:0000269" key="5">
    <source>
    </source>
</evidence>
<evidence type="ECO:0000269" key="6">
    <source>
    </source>
</evidence>
<evidence type="ECO:0000269" key="7">
    <source>
    </source>
</evidence>
<evidence type="ECO:0000269" key="8">
    <source>
    </source>
</evidence>
<evidence type="ECO:0000269" key="9">
    <source>
    </source>
</evidence>
<evidence type="ECO:0000269" key="10">
    <source>
    </source>
</evidence>
<evidence type="ECO:0000269" key="11">
    <source>
    </source>
</evidence>
<evidence type="ECO:0000269" key="12">
    <source>
    </source>
</evidence>
<evidence type="ECO:0000269" key="13">
    <source>
    </source>
</evidence>
<evidence type="ECO:0000303" key="14">
    <source>
    </source>
</evidence>
<evidence type="ECO:0000305" key="15"/>
<name>HPM2_HYPSB</name>
<gene>
    <name evidence="14" type="primary">hpm2</name>
</gene>
<organism>
    <name type="scientific">Hypomyces subiculosus</name>
    <name type="common">Nectria subiculosa</name>
    <dbReference type="NCBI Taxonomy" id="193393"/>
    <lineage>
        <taxon>Eukaryota</taxon>
        <taxon>Fungi</taxon>
        <taxon>Dikarya</taxon>
        <taxon>Ascomycota</taxon>
        <taxon>Pezizomycotina</taxon>
        <taxon>Sordariomycetes</taxon>
        <taxon>Hypocreomycetidae</taxon>
        <taxon>Hypocreales</taxon>
        <taxon>Hypocreaceae</taxon>
        <taxon>Hypomyces</taxon>
    </lineage>
</organism>
<accession>B3FWR8</accession>
<protein>
    <recommendedName>
        <fullName evidence="14">Glutathione S-transferase hmp2</fullName>
        <ecNumber evidence="7">2.5.1.18</ecNumber>
    </recommendedName>
    <alternativeName>
        <fullName evidence="14">Hypothemycin biosynthesis cluster protein hpm2</fullName>
    </alternativeName>
</protein>
<reference key="1">
    <citation type="journal article" date="2008" name="Appl. Environ. Microbiol.">
        <title>Genes for the biosynthesis of the fungal polyketides hypothemycin from Hypomyces subiculosus and radicicol from Pochonia chlamydosporia.</title>
        <authorList>
            <person name="Reeves C.D."/>
            <person name="Hu Z."/>
            <person name="Reid R."/>
            <person name="Kealey J.T."/>
        </authorList>
    </citation>
    <scope>NUCLEOTIDE SEQUENCE [GENOMIC DNA]</scope>
    <scope>FUNCTION</scope>
    <scope>PATHWAY</scope>
    <scope>CATALYTIC ACTIVITY</scope>
    <source>
        <strain>DSM11931</strain>
        <strain>DSM11932</strain>
    </source>
</reference>
<reference key="2">
    <citation type="journal article" date="1999" name="Immunopharmacology">
        <title>Hypothemycin inhibits the proliferative response and modulates the production of cytokines during T cell activation.</title>
        <authorList>
            <person name="Camacho R."/>
            <person name="Staruch M.J."/>
            <person name="DaSilva C."/>
            <person name="Koprak S."/>
            <person name="Sewell T."/>
            <person name="Salituro G."/>
            <person name="Dumont F.J."/>
        </authorList>
    </citation>
    <scope>BIOTECHNOLOGY</scope>
</reference>
<reference key="3">
    <citation type="journal article" date="1999" name="Jpn. J. Cancer Res.">
        <title>Antitumor efficacy of hypothemycin, a new Ras-signaling inhibitor.</title>
        <authorList>
            <person name="Tanaka H."/>
            <person name="Nishida K."/>
            <person name="Sugita K."/>
            <person name="Yoshioka T."/>
        </authorList>
    </citation>
    <scope>BIOTECHNOLOGY</scope>
</reference>
<reference key="4">
    <citation type="journal article" date="1999" name="Life Sci.">
        <title>Suppression of oncogenic transformation by hypothemycin associated with accelerated cyclin D1 degradation through ubiquitin-proteasome pathway.</title>
        <authorList>
            <person name="Sonoda H."/>
            <person name="Omi K."/>
            <person name="Hojo K."/>
            <person name="Nishida K."/>
            <person name="Omura S."/>
            <person name="Sugita K."/>
        </authorList>
    </citation>
    <scope>BIOTECHNOLOGY</scope>
</reference>
<reference key="5">
    <citation type="journal article" date="2008" name="J. Struct. Biol.">
        <title>Molecular modeling and crystal structure of ERK2-hypothemycin complexes.</title>
        <authorList>
            <person name="Rastelli G."/>
            <person name="Rosenfeld R."/>
            <person name="Reid R."/>
            <person name="Santi D.V."/>
        </authorList>
    </citation>
    <scope>BIOTECHNOLOGY</scope>
</reference>
<reference key="6">
    <citation type="journal article" date="2010" name="Biol. Pharm. Bull.">
        <title>The resorcylic acid lactone hypothemycin selectively inhibits the mitogen-activated protein kinase kinase-extracellular signal-regulated kinase pathway in cells.</title>
        <authorList>
            <person name="Fukazawa H."/>
            <person name="Ikeda Y."/>
            <person name="Fukuyama M."/>
            <person name="Suzuki T."/>
            <person name="Hori H."/>
            <person name="Okuda T."/>
            <person name="Uehara Y."/>
        </authorList>
    </citation>
    <scope>BIOTECHNOLOGY</scope>
</reference>
<reference key="7">
    <citation type="journal article" date="2010" name="J. Am. Chem. Soc.">
        <title>Enzymatic synthesis of resorcylic acid lactones by cooperation of fungal iterative polyketide synthases involved in hypothemycin biosynthesis.</title>
        <authorList>
            <person name="Zhou H."/>
            <person name="Qiao K."/>
            <person name="Gao Z."/>
            <person name="Meehan M.J."/>
            <person name="Li J.W."/>
            <person name="Zhao X."/>
            <person name="Dorrestein P.C."/>
            <person name="Vederas J.C."/>
            <person name="Tang Y."/>
        </authorList>
    </citation>
    <scope>FUNCTION</scope>
</reference>
<reference key="8">
    <citation type="journal article" date="2013" name="Elife">
        <title>Hypothemycin, a fungal natural product, identifies therapeutic targets in Trypanosoma brucei [corrected].</title>
        <authorList>
            <person name="Nishino M."/>
            <person name="Choy J.W."/>
            <person name="Gushwa N.N."/>
            <person name="Oses-Prieto J.A."/>
            <person name="Koupparis K."/>
            <person name="Burlingame A.L."/>
            <person name="Renslo A.R."/>
            <person name="McKerrow J.H."/>
            <person name="Taunton J."/>
        </authorList>
    </citation>
    <scope>BIOTECHNOLOGY</scope>
</reference>
<reference key="9">
    <citation type="journal article" date="2013" name="J. Agric. Food Chem.">
        <title>Antifungal activity of hypothemycin against Peronophythora litchii in vitro and in vivo.</title>
        <authorList>
            <person name="Xu L."/>
            <person name="Xue J."/>
            <person name="Wu P."/>
            <person name="Wang D."/>
            <person name="Lin L."/>
            <person name="Jiang Y."/>
            <person name="Duan X."/>
            <person name="Wei X."/>
        </authorList>
    </citation>
    <scope>BIOTECHNOLOGY</scope>
</reference>
<reference key="10">
    <citation type="journal article" date="2015" name="Int. Immunopharmacol.">
        <title>Hypothemycin inhibits tumor necrosis factor-alpha production by tristetraprolin-dependent down-regulation of mRNA stability in lipopolysaccharide-stimulated macrophages.</title>
        <authorList>
            <person name="Park K.H."/>
            <person name="Yoon Y.D."/>
            <person name="Kang M.R."/>
            <person name="Yun J."/>
            <person name="Oh S.J."/>
            <person name="Lee C.W."/>
            <person name="Lee M.Y."/>
            <person name="Han S.B."/>
            <person name="Kim Y."/>
            <person name="Kang J.S."/>
        </authorList>
    </citation>
    <scope>BIOTECHNOLOGY</scope>
</reference>
<proteinExistence type="evidence at protein level"/>